<comment type="function">
    <text evidence="1">Essential cell division protein. May link together the upstream cell division proteins, which are predominantly cytoplasmic, with the downstream cell division proteins, which are predominantly periplasmic.</text>
</comment>
<comment type="subunit">
    <text evidence="1">Part of a complex composed of FtsB, FtsL and FtsQ.</text>
</comment>
<comment type="subcellular location">
    <subcellularLocation>
        <location evidence="1">Cell inner membrane</location>
        <topology evidence="1">Single-pass type II membrane protein</topology>
    </subcellularLocation>
    <text evidence="1">Localizes to the division septum.</text>
</comment>
<comment type="similarity">
    <text evidence="1">Belongs to the FtsB family.</text>
</comment>
<sequence length="92" mass="11020">MRLLIIILAFVLMLFQYDLWFGKNGYLDYQETQQEIAVHKEENTKLSQRNQVIAAEIKDLKDGVNAIQERARLQYEMVKPNETFYRITKEHK</sequence>
<protein>
    <recommendedName>
        <fullName evidence="1">Cell division protein FtsB</fullName>
    </recommendedName>
</protein>
<gene>
    <name evidence="1" type="primary">ftsB</name>
    <name type="ordered locus">Asuc_2033</name>
</gene>
<evidence type="ECO:0000255" key="1">
    <source>
        <dbReference type="HAMAP-Rule" id="MF_00599"/>
    </source>
</evidence>
<proteinExistence type="inferred from homology"/>
<organism>
    <name type="scientific">Actinobacillus succinogenes (strain ATCC 55618 / DSM 22257 / CCUG 43843 / 130Z)</name>
    <dbReference type="NCBI Taxonomy" id="339671"/>
    <lineage>
        <taxon>Bacteria</taxon>
        <taxon>Pseudomonadati</taxon>
        <taxon>Pseudomonadota</taxon>
        <taxon>Gammaproteobacteria</taxon>
        <taxon>Pasteurellales</taxon>
        <taxon>Pasteurellaceae</taxon>
        <taxon>Actinobacillus</taxon>
    </lineage>
</organism>
<reference key="1">
    <citation type="journal article" date="2010" name="BMC Genomics">
        <title>A genomic perspective on the potential of Actinobacillus succinogenes for industrial succinate production.</title>
        <authorList>
            <person name="McKinlay J.B."/>
            <person name="Laivenieks M."/>
            <person name="Schindler B.D."/>
            <person name="McKinlay A.A."/>
            <person name="Siddaramappa S."/>
            <person name="Challacombe J.F."/>
            <person name="Lowry S.R."/>
            <person name="Clum A."/>
            <person name="Lapidus A.L."/>
            <person name="Burkhart K.B."/>
            <person name="Harkins V."/>
            <person name="Vieille C."/>
        </authorList>
    </citation>
    <scope>NUCLEOTIDE SEQUENCE [LARGE SCALE GENOMIC DNA]</scope>
    <source>
        <strain>ATCC 55618 / DSM 22257 / CCUG 43843 / 130Z</strain>
    </source>
</reference>
<accession>A6VQY2</accession>
<name>FTSB_ACTSZ</name>
<keyword id="KW-0131">Cell cycle</keyword>
<keyword id="KW-0132">Cell division</keyword>
<keyword id="KW-0997">Cell inner membrane</keyword>
<keyword id="KW-1003">Cell membrane</keyword>
<keyword id="KW-0175">Coiled coil</keyword>
<keyword id="KW-0472">Membrane</keyword>
<keyword id="KW-1185">Reference proteome</keyword>
<keyword id="KW-0812">Transmembrane</keyword>
<keyword id="KW-1133">Transmembrane helix</keyword>
<feature type="chain" id="PRO_1000072627" description="Cell division protein FtsB">
    <location>
        <begin position="1"/>
        <end position="92"/>
    </location>
</feature>
<feature type="topological domain" description="Cytoplasmic" evidence="1">
    <location>
        <begin position="1"/>
        <end position="3"/>
    </location>
</feature>
<feature type="transmembrane region" description="Helical" evidence="1">
    <location>
        <begin position="4"/>
        <end position="21"/>
    </location>
</feature>
<feature type="topological domain" description="Periplasmic" evidence="1">
    <location>
        <begin position="22"/>
        <end position="92"/>
    </location>
</feature>
<feature type="coiled-coil region" evidence="1">
    <location>
        <begin position="27"/>
        <end position="62"/>
    </location>
</feature>
<dbReference type="EMBL" id="CP000746">
    <property type="protein sequence ID" value="ABR75379.1"/>
    <property type="molecule type" value="Genomic_DNA"/>
</dbReference>
<dbReference type="RefSeq" id="WP_012073755.1">
    <property type="nucleotide sequence ID" value="NC_009655.1"/>
</dbReference>
<dbReference type="SMR" id="A6VQY2"/>
<dbReference type="STRING" id="339671.Asuc_2033"/>
<dbReference type="KEGG" id="asu:Asuc_2033"/>
<dbReference type="eggNOG" id="COG2919">
    <property type="taxonomic scope" value="Bacteria"/>
</dbReference>
<dbReference type="HOGENOM" id="CLU_134863_5_2_6"/>
<dbReference type="OrthoDB" id="7061211at2"/>
<dbReference type="Proteomes" id="UP000001114">
    <property type="component" value="Chromosome"/>
</dbReference>
<dbReference type="GO" id="GO:0032153">
    <property type="term" value="C:cell division site"/>
    <property type="evidence" value="ECO:0007669"/>
    <property type="project" value="UniProtKB-UniRule"/>
</dbReference>
<dbReference type="GO" id="GO:0030428">
    <property type="term" value="C:cell septum"/>
    <property type="evidence" value="ECO:0007669"/>
    <property type="project" value="TreeGrafter"/>
</dbReference>
<dbReference type="GO" id="GO:0005886">
    <property type="term" value="C:plasma membrane"/>
    <property type="evidence" value="ECO:0007669"/>
    <property type="project" value="UniProtKB-SubCell"/>
</dbReference>
<dbReference type="GO" id="GO:0043093">
    <property type="term" value="P:FtsZ-dependent cytokinesis"/>
    <property type="evidence" value="ECO:0007669"/>
    <property type="project" value="UniProtKB-UniRule"/>
</dbReference>
<dbReference type="HAMAP" id="MF_00599">
    <property type="entry name" value="FtsB"/>
    <property type="match status" value="1"/>
</dbReference>
<dbReference type="InterPro" id="IPR023081">
    <property type="entry name" value="Cell_div_FtsB"/>
</dbReference>
<dbReference type="InterPro" id="IPR007060">
    <property type="entry name" value="FtsL/DivIC"/>
</dbReference>
<dbReference type="NCBIfam" id="NF002058">
    <property type="entry name" value="PRK00888.1"/>
    <property type="match status" value="1"/>
</dbReference>
<dbReference type="PANTHER" id="PTHR37485">
    <property type="entry name" value="CELL DIVISION PROTEIN FTSB"/>
    <property type="match status" value="1"/>
</dbReference>
<dbReference type="PANTHER" id="PTHR37485:SF1">
    <property type="entry name" value="CELL DIVISION PROTEIN FTSB"/>
    <property type="match status" value="1"/>
</dbReference>
<dbReference type="Pfam" id="PF04977">
    <property type="entry name" value="DivIC"/>
    <property type="match status" value="1"/>
</dbReference>